<protein>
    <recommendedName>
        <fullName>Probable L,D-transpeptidase ErfK/SrfK</fullName>
        <ecNumber>2.-.-.-</ecNumber>
    </recommendedName>
</protein>
<name>ERFK_SALTY</name>
<gene>
    <name type="primary">erfK</name>
    <name type="synonym">srfK</name>
    <name type="ordered locus">STM2015</name>
</gene>
<dbReference type="EC" id="2.-.-.-"/>
<dbReference type="EMBL" id="L35477">
    <property type="protein sequence ID" value="AAA69298.1"/>
    <property type="molecule type" value="Genomic_DNA"/>
</dbReference>
<dbReference type="EMBL" id="AE006468">
    <property type="protein sequence ID" value="AAL20919.1"/>
    <property type="molecule type" value="Genomic_DNA"/>
</dbReference>
<dbReference type="RefSeq" id="NP_460960.1">
    <property type="nucleotide sequence ID" value="NC_003197.2"/>
</dbReference>
<dbReference type="SMR" id="P40680"/>
<dbReference type="STRING" id="99287.STM2015"/>
<dbReference type="PaxDb" id="99287-STM2015"/>
<dbReference type="GeneID" id="1253536"/>
<dbReference type="KEGG" id="stm:STM2015"/>
<dbReference type="PATRIC" id="fig|99287.12.peg.2137"/>
<dbReference type="HOGENOM" id="CLU_046834_0_1_6"/>
<dbReference type="PhylomeDB" id="P40680"/>
<dbReference type="BioCyc" id="SENT99287:STM2015-MONOMER"/>
<dbReference type="UniPathway" id="UPA00219"/>
<dbReference type="Proteomes" id="UP000001014">
    <property type="component" value="Chromosome"/>
</dbReference>
<dbReference type="GO" id="GO:0042597">
    <property type="term" value="C:periplasmic space"/>
    <property type="evidence" value="ECO:0007669"/>
    <property type="project" value="UniProtKB-SubCell"/>
</dbReference>
<dbReference type="GO" id="GO:0016757">
    <property type="term" value="F:glycosyltransferase activity"/>
    <property type="evidence" value="ECO:0007669"/>
    <property type="project" value="UniProtKB-KW"/>
</dbReference>
<dbReference type="GO" id="GO:0071972">
    <property type="term" value="F:peptidoglycan L,D-transpeptidase activity"/>
    <property type="evidence" value="ECO:0000318"/>
    <property type="project" value="GO_Central"/>
</dbReference>
<dbReference type="GO" id="GO:0071555">
    <property type="term" value="P:cell wall organization"/>
    <property type="evidence" value="ECO:0007669"/>
    <property type="project" value="UniProtKB-KW"/>
</dbReference>
<dbReference type="GO" id="GO:0018104">
    <property type="term" value="P:peptidoglycan-protein cross-linking"/>
    <property type="evidence" value="ECO:0000318"/>
    <property type="project" value="GO_Central"/>
</dbReference>
<dbReference type="GO" id="GO:0008360">
    <property type="term" value="P:regulation of cell shape"/>
    <property type="evidence" value="ECO:0007669"/>
    <property type="project" value="UniProtKB-KW"/>
</dbReference>
<dbReference type="CDD" id="cd16913">
    <property type="entry name" value="YkuD_like"/>
    <property type="match status" value="1"/>
</dbReference>
<dbReference type="FunFam" id="2.40.440.10:FF:000001">
    <property type="entry name" value="L,D-transpeptidase YbiS"/>
    <property type="match status" value="1"/>
</dbReference>
<dbReference type="Gene3D" id="2.40.440.10">
    <property type="entry name" value="L,D-transpeptidase catalytic domain-like"/>
    <property type="match status" value="1"/>
</dbReference>
<dbReference type="InterPro" id="IPR050979">
    <property type="entry name" value="LD-transpeptidase"/>
</dbReference>
<dbReference type="InterPro" id="IPR005490">
    <property type="entry name" value="LD_TPept_cat_dom"/>
</dbReference>
<dbReference type="InterPro" id="IPR041597">
    <property type="entry name" value="Ldt_C"/>
</dbReference>
<dbReference type="InterPro" id="IPR038063">
    <property type="entry name" value="Transpep_catalytic_dom"/>
</dbReference>
<dbReference type="NCBIfam" id="NF007563">
    <property type="entry name" value="PRK10190.1"/>
    <property type="match status" value="1"/>
</dbReference>
<dbReference type="PANTHER" id="PTHR30582">
    <property type="entry name" value="L,D-TRANSPEPTIDASE"/>
    <property type="match status" value="1"/>
</dbReference>
<dbReference type="PANTHER" id="PTHR30582:SF24">
    <property type="entry name" value="L,D-TRANSPEPTIDASE ERFK_SRFK-RELATED"/>
    <property type="match status" value="1"/>
</dbReference>
<dbReference type="Pfam" id="PF17969">
    <property type="entry name" value="Ldt_C"/>
    <property type="match status" value="1"/>
</dbReference>
<dbReference type="Pfam" id="PF03734">
    <property type="entry name" value="YkuD"/>
    <property type="match status" value="1"/>
</dbReference>
<dbReference type="SUPFAM" id="SSF141523">
    <property type="entry name" value="L,D-transpeptidase catalytic domain-like"/>
    <property type="match status" value="1"/>
</dbReference>
<dbReference type="PROSITE" id="PS52029">
    <property type="entry name" value="LD_TPASE"/>
    <property type="match status" value="1"/>
</dbReference>
<comment type="pathway">
    <text>Cell wall biogenesis; peptidoglycan biosynthesis.</text>
</comment>
<comment type="subcellular location">
    <subcellularLocation>
        <location evidence="3">Periplasm</location>
    </subcellularLocation>
</comment>
<comment type="similarity">
    <text evidence="3">Belongs to the YkuD family.</text>
</comment>
<feature type="signal peptide" evidence="1">
    <location>
        <begin position="1"/>
        <end position="21"/>
    </location>
</feature>
<feature type="chain" id="PRO_0000021196" description="Probable L,D-transpeptidase ErfK/SrfK">
    <location>
        <begin position="22"/>
        <end position="309"/>
    </location>
</feature>
<feature type="domain" description="L,D-TPase catalytic" evidence="2">
    <location>
        <begin position="96"/>
        <end position="231"/>
    </location>
</feature>
<feature type="active site" description="Proton donor/acceptor" evidence="2">
    <location>
        <position position="191"/>
    </location>
</feature>
<feature type="active site" description="Nucleophile" evidence="2">
    <location>
        <position position="207"/>
    </location>
</feature>
<sequence>MRRITPFFPFFVLLVSHFSLAISYPLPPEGSRLVGQPVTIAVPQNNTQPLESFAARYGQGLSNMLEANPGVDVFLPQSGSTLVVPQQLILPDTVREGIVVNVAEMRLYYYPAGTNTVEVLPIGIGQAGRETPRNWVTAVERKQDGPVWVPTANTRREYAKEGKTLPAMVPAGPDNPMGLYAIYIGRLYAIHGTNANFGIGLRVSQGCIRLRNDDIKYLFDHVPVGTRVQIIDRPVKFSVEPDGSRWLEVHEPLSRNRAEFESDKKVPLPVTPVLRTFIKGDDVDTSRVNEVLERRSGMPVNISAGRPGL</sequence>
<accession>P40680</accession>
<proteinExistence type="inferred from homology"/>
<organism>
    <name type="scientific">Salmonella typhimurium (strain LT2 / SGSC1412 / ATCC 700720)</name>
    <dbReference type="NCBI Taxonomy" id="99287"/>
    <lineage>
        <taxon>Bacteria</taxon>
        <taxon>Pseudomonadati</taxon>
        <taxon>Pseudomonadota</taxon>
        <taxon>Gammaproteobacteria</taxon>
        <taxon>Enterobacterales</taxon>
        <taxon>Enterobacteriaceae</taxon>
        <taxon>Salmonella</taxon>
    </lineage>
</organism>
<keyword id="KW-0133">Cell shape</keyword>
<keyword id="KW-0961">Cell wall biogenesis/degradation</keyword>
<keyword id="KW-0328">Glycosyltransferase</keyword>
<keyword id="KW-0378">Hydrolase</keyword>
<keyword id="KW-0573">Peptidoglycan synthesis</keyword>
<keyword id="KW-0574">Periplasm</keyword>
<keyword id="KW-1185">Reference proteome</keyword>
<keyword id="KW-0732">Signal</keyword>
<keyword id="KW-0808">Transferase</keyword>
<reference key="1">
    <citation type="journal article" date="1995" name="J. Bacteriol.">
        <title>The end of the cob operon: evidence that the last gene (cobT) catalyzes synthesis of the lower ligand of vitamin B12, dimethylbenzimidazole.</title>
        <authorList>
            <person name="Chen P."/>
            <person name="Ailion M."/>
            <person name="Weyand N."/>
            <person name="Roth J.R."/>
        </authorList>
    </citation>
    <scope>NUCLEOTIDE SEQUENCE [GENOMIC DNA]</scope>
    <source>
        <strain>LT2</strain>
    </source>
</reference>
<reference key="2">
    <citation type="journal article" date="2001" name="Nature">
        <title>Complete genome sequence of Salmonella enterica serovar Typhimurium LT2.</title>
        <authorList>
            <person name="McClelland M."/>
            <person name="Sanderson K.E."/>
            <person name="Spieth J."/>
            <person name="Clifton S.W."/>
            <person name="Latreille P."/>
            <person name="Courtney L."/>
            <person name="Porwollik S."/>
            <person name="Ali J."/>
            <person name="Dante M."/>
            <person name="Du F."/>
            <person name="Hou S."/>
            <person name="Layman D."/>
            <person name="Leonard S."/>
            <person name="Nguyen C."/>
            <person name="Scott K."/>
            <person name="Holmes A."/>
            <person name="Grewal N."/>
            <person name="Mulvaney E."/>
            <person name="Ryan E."/>
            <person name="Sun H."/>
            <person name="Florea L."/>
            <person name="Miller W."/>
            <person name="Stoneking T."/>
            <person name="Nhan M."/>
            <person name="Waterston R."/>
            <person name="Wilson R.K."/>
        </authorList>
    </citation>
    <scope>NUCLEOTIDE SEQUENCE [LARGE SCALE GENOMIC DNA]</scope>
    <source>
        <strain>LT2 / SGSC1412 / ATCC 700720</strain>
    </source>
</reference>
<evidence type="ECO:0000250" key="1"/>
<evidence type="ECO:0000255" key="2">
    <source>
        <dbReference type="PROSITE-ProRule" id="PRU01373"/>
    </source>
</evidence>
<evidence type="ECO:0000305" key="3"/>